<reference key="1">
    <citation type="submission" date="2008-04" db="EMBL/GenBank/DDBJ databases">
        <title>Complete sequence of Clostridium botulinum strain Eklund.</title>
        <authorList>
            <person name="Brinkac L.M."/>
            <person name="Brown J.L."/>
            <person name="Bruce D."/>
            <person name="Detter C."/>
            <person name="Munk C."/>
            <person name="Smith L.A."/>
            <person name="Smith T.J."/>
            <person name="Sutton G."/>
            <person name="Brettin T.S."/>
        </authorList>
    </citation>
    <scope>NUCLEOTIDE SEQUENCE [LARGE SCALE GENOMIC DNA]</scope>
    <source>
        <strain>Eklund 17B / Type B</strain>
    </source>
</reference>
<proteinExistence type="inferred from homology"/>
<name>Y2361_CLOBB</name>
<dbReference type="EMBL" id="CP001056">
    <property type="protein sequence ID" value="ACD21853.1"/>
    <property type="molecule type" value="Genomic_DNA"/>
</dbReference>
<dbReference type="SMR" id="B2TQW1"/>
<dbReference type="KEGG" id="cbk:CLL_A2361"/>
<dbReference type="PATRIC" id="fig|935198.13.peg.2318"/>
<dbReference type="HOGENOM" id="CLU_061989_0_1_9"/>
<dbReference type="Proteomes" id="UP000001195">
    <property type="component" value="Chromosome"/>
</dbReference>
<dbReference type="GO" id="GO:0005829">
    <property type="term" value="C:cytosol"/>
    <property type="evidence" value="ECO:0007669"/>
    <property type="project" value="TreeGrafter"/>
</dbReference>
<dbReference type="GO" id="GO:0033194">
    <property type="term" value="P:response to hydroperoxide"/>
    <property type="evidence" value="ECO:0007669"/>
    <property type="project" value="TreeGrafter"/>
</dbReference>
<dbReference type="HAMAP" id="MF_00652">
    <property type="entry name" value="UPF0246"/>
    <property type="match status" value="1"/>
</dbReference>
<dbReference type="InterPro" id="IPR005583">
    <property type="entry name" value="YaaA"/>
</dbReference>
<dbReference type="NCBIfam" id="NF002542">
    <property type="entry name" value="PRK02101.1-3"/>
    <property type="match status" value="1"/>
</dbReference>
<dbReference type="PANTHER" id="PTHR30283:SF4">
    <property type="entry name" value="PEROXIDE STRESS RESISTANCE PROTEIN YAAA"/>
    <property type="match status" value="1"/>
</dbReference>
<dbReference type="PANTHER" id="PTHR30283">
    <property type="entry name" value="PEROXIDE STRESS RESPONSE PROTEIN YAAA"/>
    <property type="match status" value="1"/>
</dbReference>
<dbReference type="Pfam" id="PF03883">
    <property type="entry name" value="H2O2_YaaD"/>
    <property type="match status" value="1"/>
</dbReference>
<comment type="similarity">
    <text evidence="1">Belongs to the UPF0246 family.</text>
</comment>
<sequence length="257" mass="29881">MLVVISPAKTLDFNNINETLPMTNPKFLKEAKILVEELKNYDSYSLGKLMKTSDKLSLLNKNRFDIWNESFDNSRQCLIAFKGEVFKGMDVGSFNIEDLFYTNDHLRILSGLYGVLNPFDGVNPYRLEMGTKLSFNNYKNLYDYWKDKLKYKLIEDIKSTGNNTLVNLASYEYFKSIEGIDILDTSINIVTPIFKEYRNGKYKIVTMKAKKARGLMVSFIMKNKINNIEDLKKFDLEGYLYNEDLSNNNNLVFTLEN</sequence>
<gene>
    <name type="ordered locus">CLL_A2361</name>
</gene>
<organism>
    <name type="scientific">Clostridium botulinum (strain Eklund 17B / Type B)</name>
    <dbReference type="NCBI Taxonomy" id="935198"/>
    <lineage>
        <taxon>Bacteria</taxon>
        <taxon>Bacillati</taxon>
        <taxon>Bacillota</taxon>
        <taxon>Clostridia</taxon>
        <taxon>Eubacteriales</taxon>
        <taxon>Clostridiaceae</taxon>
        <taxon>Clostridium</taxon>
    </lineage>
</organism>
<evidence type="ECO:0000255" key="1">
    <source>
        <dbReference type="HAMAP-Rule" id="MF_00652"/>
    </source>
</evidence>
<accession>B2TQW1</accession>
<feature type="chain" id="PRO_1000131109" description="UPF0246 protein CLL_A2361">
    <location>
        <begin position="1"/>
        <end position="257"/>
    </location>
</feature>
<protein>
    <recommendedName>
        <fullName evidence="1">UPF0246 protein CLL_A2361</fullName>
    </recommendedName>
</protein>